<feature type="chain" id="PRO_0000197297" description="Metallothionein">
    <location>
        <begin position="1"/>
        <end position="60"/>
    </location>
</feature>
<feature type="region of interest" description="Beta">
    <location>
        <begin position="1"/>
        <end position="28"/>
    </location>
</feature>
<feature type="region of interest" description="Alpha">
    <location>
        <begin position="29"/>
        <end position="60"/>
    </location>
</feature>
<feature type="binding site" evidence="2">
    <location>
        <position position="4"/>
    </location>
    <ligand>
        <name>a divalent metal cation</name>
        <dbReference type="ChEBI" id="CHEBI:60240"/>
        <label>1</label>
        <note>in cluster B</note>
    </ligand>
</feature>
<feature type="binding site" evidence="2">
    <location>
        <position position="6"/>
    </location>
    <ligand>
        <name>a divalent metal cation</name>
        <dbReference type="ChEBI" id="CHEBI:60240"/>
        <label>1</label>
        <note>in cluster B</note>
    </ligand>
</feature>
<feature type="binding site" evidence="2">
    <location>
        <position position="6"/>
    </location>
    <ligand>
        <name>a divalent metal cation</name>
        <dbReference type="ChEBI" id="CHEBI:60240"/>
        <label>2</label>
        <note>in cluster B</note>
    </ligand>
</feature>
<feature type="binding site" evidence="2">
    <location>
        <position position="12"/>
    </location>
    <ligand>
        <name>a divalent metal cation</name>
        <dbReference type="ChEBI" id="CHEBI:60240"/>
        <label>2</label>
        <note>in cluster B</note>
    </ligand>
</feature>
<feature type="binding site" evidence="2">
    <location>
        <position position="14"/>
    </location>
    <ligand>
        <name>a divalent metal cation</name>
        <dbReference type="ChEBI" id="CHEBI:60240"/>
        <label>2</label>
        <note>in cluster B</note>
    </ligand>
</feature>
<feature type="binding site" evidence="2">
    <location>
        <position position="14"/>
    </location>
    <ligand>
        <name>a divalent metal cation</name>
        <dbReference type="ChEBI" id="CHEBI:60240"/>
        <label>3</label>
        <note>in cluster B</note>
    </ligand>
</feature>
<feature type="binding site" evidence="2">
    <location>
        <position position="18"/>
    </location>
    <ligand>
        <name>a divalent metal cation</name>
        <dbReference type="ChEBI" id="CHEBI:60240"/>
        <label>3</label>
        <note>in cluster B</note>
    </ligand>
</feature>
<feature type="binding site" evidence="2">
    <location>
        <position position="20"/>
    </location>
    <ligand>
        <name>a divalent metal cation</name>
        <dbReference type="ChEBI" id="CHEBI:60240"/>
        <label>1</label>
        <note>in cluster B</note>
    </ligand>
</feature>
<feature type="binding site" evidence="2">
    <location>
        <position position="23"/>
    </location>
    <ligand>
        <name>a divalent metal cation</name>
        <dbReference type="ChEBI" id="CHEBI:60240"/>
        <label>1</label>
        <note>in cluster B</note>
    </ligand>
</feature>
<feature type="binding site" evidence="2">
    <location>
        <position position="23"/>
    </location>
    <ligand>
        <name>a divalent metal cation</name>
        <dbReference type="ChEBI" id="CHEBI:60240"/>
        <label>3</label>
        <note>in cluster B</note>
    </ligand>
</feature>
<feature type="binding site" evidence="2">
    <location>
        <position position="25"/>
    </location>
    <ligand>
        <name>a divalent metal cation</name>
        <dbReference type="ChEBI" id="CHEBI:60240"/>
        <label>2</label>
        <note>in cluster B</note>
    </ligand>
</feature>
<feature type="binding site" evidence="2">
    <location>
        <position position="28"/>
    </location>
    <ligand>
        <name>a divalent metal cation</name>
        <dbReference type="ChEBI" id="CHEBI:60240"/>
        <label>3</label>
        <note>in cluster B</note>
    </ligand>
</feature>
<feature type="binding site" evidence="2">
    <location>
        <position position="32"/>
    </location>
    <ligand>
        <name>a divalent metal cation</name>
        <dbReference type="ChEBI" id="CHEBI:60240"/>
        <label>4</label>
        <note>in cluster A</note>
    </ligand>
</feature>
<feature type="binding site" evidence="2">
    <location>
        <position position="33"/>
    </location>
    <ligand>
        <name>a divalent metal cation</name>
        <dbReference type="ChEBI" id="CHEBI:60240"/>
        <label>4</label>
        <note>in cluster A</note>
    </ligand>
</feature>
<feature type="binding site" evidence="2">
    <location>
        <position position="33"/>
    </location>
    <ligand>
        <name>a divalent metal cation</name>
        <dbReference type="ChEBI" id="CHEBI:60240"/>
        <label>5</label>
        <note>in cluster A</note>
    </ligand>
</feature>
<feature type="binding site" evidence="2">
    <location>
        <position position="35"/>
    </location>
    <ligand>
        <name>a divalent metal cation</name>
        <dbReference type="ChEBI" id="CHEBI:60240"/>
        <label>5</label>
        <note>in cluster A</note>
    </ligand>
</feature>
<feature type="binding site" evidence="2">
    <location>
        <position position="36"/>
    </location>
    <ligand>
        <name>a divalent metal cation</name>
        <dbReference type="ChEBI" id="CHEBI:60240"/>
        <label>5</label>
        <note>in cluster A</note>
    </ligand>
</feature>
<feature type="binding site" evidence="2">
    <location>
        <position position="36"/>
    </location>
    <ligand>
        <name>a divalent metal cation</name>
        <dbReference type="ChEBI" id="CHEBI:60240"/>
        <label>6</label>
        <note>in cluster A</note>
    </ligand>
</feature>
<feature type="binding site" evidence="2">
    <location>
        <position position="40"/>
    </location>
    <ligand>
        <name>a divalent metal cation</name>
        <dbReference type="ChEBI" id="CHEBI:60240"/>
        <label>6</label>
        <note>in cluster A</note>
    </ligand>
</feature>
<feature type="binding site" evidence="2">
    <location>
        <position position="43"/>
    </location>
    <ligand>
        <name>a divalent metal cation</name>
        <dbReference type="ChEBI" id="CHEBI:60240"/>
        <label>4</label>
        <note>in cluster A</note>
    </ligand>
</feature>
<feature type="binding site" evidence="2">
    <location>
        <position position="43"/>
    </location>
    <ligand>
        <name>a divalent metal cation</name>
        <dbReference type="ChEBI" id="CHEBI:60240"/>
        <label>6</label>
        <note>in cluster A</note>
    </ligand>
</feature>
<feature type="binding site" evidence="2">
    <location>
        <position position="47"/>
    </location>
    <ligand>
        <name>a divalent metal cation</name>
        <dbReference type="ChEBI" id="CHEBI:60240"/>
        <label>4</label>
        <note>in cluster A</note>
    </ligand>
</feature>
<feature type="binding site" evidence="2">
    <location>
        <position position="49"/>
    </location>
    <ligand>
        <name>a divalent metal cation</name>
        <dbReference type="ChEBI" id="CHEBI:60240"/>
        <label>5</label>
        <note>in cluster A</note>
    </ligand>
</feature>
<feature type="binding site" evidence="2">
    <location>
        <position position="49"/>
    </location>
    <ligand>
        <name>a divalent metal cation</name>
        <dbReference type="ChEBI" id="CHEBI:60240"/>
        <label>7</label>
        <note>in cluster A</note>
    </ligand>
</feature>
<feature type="binding site" evidence="3">
    <location>
        <position position="54"/>
    </location>
    <ligand>
        <name>a divalent metal cation</name>
        <dbReference type="ChEBI" id="CHEBI:60240"/>
        <label>7</label>
        <note>in cluster A</note>
    </ligand>
</feature>
<feature type="binding site" evidence="2">
    <location>
        <position position="58"/>
    </location>
    <ligand>
        <name>a divalent metal cation</name>
        <dbReference type="ChEBI" id="CHEBI:60240"/>
        <label>7</label>
        <note>in cluster A</note>
    </ligand>
</feature>
<feature type="binding site" evidence="2">
    <location>
        <position position="59"/>
    </location>
    <ligand>
        <name>a divalent metal cation</name>
        <dbReference type="ChEBI" id="CHEBI:60240"/>
        <label>6</label>
        <note>in cluster A</note>
    </ligand>
</feature>
<feature type="binding site" evidence="2">
    <location>
        <position position="59"/>
    </location>
    <ligand>
        <name>a divalent metal cation</name>
        <dbReference type="ChEBI" id="CHEBI:60240"/>
        <label>7</label>
        <note>in cluster A</note>
    </ligand>
</feature>
<protein>
    <recommendedName>
        <fullName>Metallothionein</fullName>
        <shortName>MT</shortName>
    </recommendedName>
</protein>
<reference key="1">
    <citation type="submission" date="2003-03" db="EMBL/GenBank/DDBJ databases">
        <title>Tilapia metallothionein genes: PCR-cloning and gene regulation studies in vitro.</title>
        <authorList>
            <person name="Cheung P.L."/>
            <person name="Lam K.L."/>
            <person name="Chan K.M."/>
        </authorList>
    </citation>
    <scope>NUCLEOTIDE SEQUENCE [GENOMIC DNA]</scope>
</reference>
<keyword id="KW-0479">Metal-binding</keyword>
<keyword id="KW-0480">Metal-thiolate cluster</keyword>
<keyword id="KW-1185">Reference proteome</keyword>
<name>MT_OREAU</name>
<dbReference type="EMBL" id="AY257201">
    <property type="protein sequence ID" value="AAP14677.1"/>
    <property type="molecule type" value="Genomic_DNA"/>
</dbReference>
<dbReference type="SMR" id="Q7ZZP9"/>
<dbReference type="Ensembl" id="ENSOABT00000038675.2">
    <property type="protein sequence ID" value="ENSOABP00000037642.1"/>
    <property type="gene ID" value="ENSOABG00000017220.2"/>
</dbReference>
<dbReference type="OMA" id="KECKCSS"/>
<dbReference type="Proteomes" id="UP000472276">
    <property type="component" value="Unassembled WGS sequence"/>
</dbReference>
<dbReference type="GO" id="GO:0046872">
    <property type="term" value="F:metal ion binding"/>
    <property type="evidence" value="ECO:0007669"/>
    <property type="project" value="UniProtKB-KW"/>
</dbReference>
<dbReference type="FunFam" id="4.10.10.10:FF:000001">
    <property type="entry name" value="Metallothionein"/>
    <property type="match status" value="1"/>
</dbReference>
<dbReference type="Gene3D" id="4.10.10.10">
    <property type="entry name" value="Metallothionein Isoform II"/>
    <property type="match status" value="1"/>
</dbReference>
<dbReference type="InterPro" id="IPR017854">
    <property type="entry name" value="Metalthion_dom_sf"/>
</dbReference>
<dbReference type="InterPro" id="IPR023587">
    <property type="entry name" value="Metalthion_dom_sf_vert"/>
</dbReference>
<dbReference type="InterPro" id="IPR000006">
    <property type="entry name" value="Metalthion_vert"/>
</dbReference>
<dbReference type="InterPro" id="IPR018064">
    <property type="entry name" value="Metalthion_vert_metal_BS"/>
</dbReference>
<dbReference type="PANTHER" id="PTHR23299">
    <property type="entry name" value="METALLOTHIONEIN"/>
    <property type="match status" value="1"/>
</dbReference>
<dbReference type="PANTHER" id="PTHR23299:SF24">
    <property type="entry name" value="METALLOTHIONEIN-1X"/>
    <property type="match status" value="1"/>
</dbReference>
<dbReference type="Pfam" id="PF00131">
    <property type="entry name" value="Metallothio"/>
    <property type="match status" value="1"/>
</dbReference>
<dbReference type="PRINTS" id="PR00860">
    <property type="entry name" value="MTVERTEBRATE"/>
</dbReference>
<dbReference type="SUPFAM" id="SSF57868">
    <property type="entry name" value="Metallothionein"/>
    <property type="match status" value="1"/>
</dbReference>
<dbReference type="PROSITE" id="PS00203">
    <property type="entry name" value="METALLOTHIONEIN_VRT"/>
    <property type="match status" value="1"/>
</dbReference>
<evidence type="ECO:0000250" key="1"/>
<evidence type="ECO:0000250" key="2">
    <source>
        <dbReference type="UniProtKB" id="P02795"/>
    </source>
</evidence>
<evidence type="ECO:0000250" key="3">
    <source>
        <dbReference type="UniProtKB" id="P62339"/>
    </source>
</evidence>
<evidence type="ECO:0000305" key="4"/>
<comment type="function">
    <text evidence="1">Metallothioneins have a high content of cysteine residues that bind various heavy metals.</text>
</comment>
<comment type="domain">
    <text>Class I metallothioneins contain 2 metal-binding domains: four divalent ions are chelated within cluster A of the alpha domain and are coordinated via cysteinyl thiolate bridges to 11 cysteine ligands. Cluster B, the corresponding region within the beta domain, can ligate three divalent ions to 9 cysteines.</text>
</comment>
<comment type="similarity">
    <text evidence="4">Belongs to the metallothionein superfamily. Type 1 family.</text>
</comment>
<accession>Q7ZZP9</accession>
<sequence length="60" mass="6035">MDPCECAKTGTCNCGGSCTCTKCSCKSCKKSCCDCCPSGCSKCASGCVCKGKTCDTSCCQ</sequence>
<proteinExistence type="inferred from homology"/>
<organism>
    <name type="scientific">Oreochromis aureus</name>
    <name type="common">Israeli tilapia</name>
    <name type="synonym">Chromis aureus</name>
    <dbReference type="NCBI Taxonomy" id="47969"/>
    <lineage>
        <taxon>Eukaryota</taxon>
        <taxon>Metazoa</taxon>
        <taxon>Chordata</taxon>
        <taxon>Craniata</taxon>
        <taxon>Vertebrata</taxon>
        <taxon>Euteleostomi</taxon>
        <taxon>Actinopterygii</taxon>
        <taxon>Neopterygii</taxon>
        <taxon>Teleostei</taxon>
        <taxon>Neoteleostei</taxon>
        <taxon>Acanthomorphata</taxon>
        <taxon>Ovalentaria</taxon>
        <taxon>Cichlomorphae</taxon>
        <taxon>Cichliformes</taxon>
        <taxon>Cichlidae</taxon>
        <taxon>African cichlids</taxon>
        <taxon>Pseudocrenilabrinae</taxon>
        <taxon>Oreochromini</taxon>
        <taxon>Oreochromis</taxon>
    </lineage>
</organism>
<gene>
    <name type="primary">mt</name>
</gene>